<proteinExistence type="evidence at protein level"/>
<comment type="function">
    <text evidence="2 3 4 7">NAD-dependent epimerase/dehydratase; part of the gene cluster that mediates the biosynthesis of fumonisins B1 (FB1), B2 (FB2), B3 (FB3), and B4 (FB4), which are carcinogenic mycotoxins (PubMed:12620260, PubMed:12720383, PubMed:15969533). Within the pathway, FUM13 stereospecifically reduces the intermediate 3-keto intermediate 2-amino-3-oxo-12,16-dimethylicosane to the 3-hydroxyl product 2-amino-3-hydroxy-12,16-dimethylicosane (PubMed:12720383, PubMed:15969533). The biosynthesis starts with the FUM1-catalyzed carbon chain assembly from one molecule of acetyl-CoA, eight molecules of malonyl-CoA, and two molecules of methionine (in S-adenosyl form). The C18 polyketide chain is released from the enzyme by a nucleophilic attack of a carbanion, which is derived from R-carbon of alanine by decarboxylation, on the carbonyl carbon of polyketide acyl chain. This step is catalyzed by the pyridoxal 5'-phosphate-dependent aminoacyl transferase FUM8. The resultant 3-keto intermediate is then stereospecifically reduced to a 3-hydroxyl product by reductase FUM13. Subsequent oxidations at C-10 by the cytochrome P450 monooxygenase FUM2, C-14 and C-15 by FUM6, FUM12 or FUM15, tricarballylic esterification of the hydroxyl groups on C-14 and C-15 by acyltransferase FUM14, and C-5 hydroxylation by 2-keto-glutarate-dependent dioxygenase FUM3 furnish the biosynthesis of fumonisins. The tricarballylic moieties are most likely derived from the citric acid cycle, and their addition to the carbon backbone may involve FUM7, FUM10, FUM11 and FUM14 (Probable).</text>
</comment>
<comment type="pathway">
    <text evidence="2 3 4">Mycotoxin biosynthesis.</text>
</comment>
<comment type="disruption phenotype">
    <text evidence="3">Leads to a strong reduction by at least 90% of the production of fumonisins B1, B2, B3 and B4, and accumulates 3-keto homologs of fumonisins B3 and B4 (PubMed:12720383).</text>
</comment>
<comment type="similarity">
    <text evidence="6">Belongs to the NAD(P)-dependent epimerase/dehydratase family. Dihydroflavonol-4-reductase subfamily.</text>
</comment>
<feature type="chain" id="PRO_0000441156" description="NAD-dependent epimerase/dehydratase FUM13">
    <location>
        <begin position="1"/>
        <end position="369"/>
    </location>
</feature>
<feature type="binding site" evidence="1">
    <location>
        <position position="176"/>
    </location>
    <ligand>
        <name>NADP(+)</name>
        <dbReference type="ChEBI" id="CHEBI:58349"/>
    </ligand>
</feature>
<keyword id="KW-0560">Oxidoreductase</keyword>
<keyword id="KW-1185">Reference proteome</keyword>
<organism>
    <name type="scientific">Gibberella moniliformis (strain M3125 / FGSC 7600)</name>
    <name type="common">Maize ear and stalk rot fungus</name>
    <name type="synonym">Fusarium verticillioides</name>
    <dbReference type="NCBI Taxonomy" id="334819"/>
    <lineage>
        <taxon>Eukaryota</taxon>
        <taxon>Fungi</taxon>
        <taxon>Dikarya</taxon>
        <taxon>Ascomycota</taxon>
        <taxon>Pezizomycotina</taxon>
        <taxon>Sordariomycetes</taxon>
        <taxon>Hypocreomycetidae</taxon>
        <taxon>Hypocreales</taxon>
        <taxon>Nectriaceae</taxon>
        <taxon>Fusarium</taxon>
        <taxon>Fusarium fujikuroi species complex</taxon>
    </lineage>
</organism>
<sequence>MSRGQELVLLTGATGHVGYAVLVKTLQAGYNVRATLRDMSRADAILSSGPVQEALSAQDLDLSFVRVPNFTAPDAFGLVLSNVTHVVHVASALRRGTSTDLKEAIIDVAVQGTRNILRAAHNCPSVRRVVITSSVSAIVDQHPVVSQSPAGRCVTPLDRHADYDAEYYKGDSLKAYTAAKTAALNATDAFLATADGGPTTLPLHFDVINIMPSFVFGPKGLAATPSDVTNGSNIFGIGLVMRHKPWDGIRLEAVCCHVDDVAQVHVNALNDHELLPLKVGAHRDFILGVKFKPEEIGEIVRRRFPREWWESESATFGARGTYDWYHTDYDVGSAERLLGRPFKCLEEQIYDSGSQVMEMLKGMTTRSYN</sequence>
<evidence type="ECO:0000250" key="1">
    <source>
        <dbReference type="UniProtKB" id="A0A059TC02"/>
    </source>
</evidence>
<evidence type="ECO:0000269" key="2">
    <source>
    </source>
</evidence>
<evidence type="ECO:0000269" key="3">
    <source>
    </source>
</evidence>
<evidence type="ECO:0000269" key="4">
    <source>
    </source>
</evidence>
<evidence type="ECO:0000303" key="5">
    <source>
    </source>
</evidence>
<evidence type="ECO:0000305" key="6"/>
<evidence type="ECO:0000305" key="7">
    <source>
    </source>
</evidence>
<protein>
    <recommendedName>
        <fullName evidence="5">NAD-dependent epimerase/dehydratase FUM13</fullName>
        <ecNumber evidence="4">1.1.1.-</ecNumber>
    </recommendedName>
    <alternativeName>
        <fullName evidence="5">Fumonisin biosynthesis cluster protein 13</fullName>
    </alternativeName>
</protein>
<reference key="1">
    <citation type="journal article" date="2003" name="Fungal Genet. Biol.">
        <title>Co-expression of 15 contiguous genes delineates a fumonisin biosynthetic gene cluster in Gibberella moniliformis.</title>
        <authorList>
            <person name="Proctor R.H."/>
            <person name="Brown D.W."/>
            <person name="Plattner R.D."/>
            <person name="Desjardins A.E."/>
        </authorList>
    </citation>
    <scope>NUCLEOTIDE SEQUENCE [GENOMIC DNA]</scope>
    <scope>PATHWAY</scope>
    <source>
        <strain>M3125 / FGSC 7600</strain>
    </source>
</reference>
<reference key="2">
    <citation type="journal article" date="2010" name="Nature">
        <title>Comparative genomics reveals mobile pathogenicity chromosomes in Fusarium.</title>
        <authorList>
            <person name="Ma L.-J."/>
            <person name="van der Does H.C."/>
            <person name="Borkovich K.A."/>
            <person name="Coleman J.J."/>
            <person name="Daboussi M.-J."/>
            <person name="Di Pietro A."/>
            <person name="Dufresne M."/>
            <person name="Freitag M."/>
            <person name="Grabherr M."/>
            <person name="Henrissat B."/>
            <person name="Houterman P.M."/>
            <person name="Kang S."/>
            <person name="Shim W.-B."/>
            <person name="Woloshuk C."/>
            <person name="Xie X."/>
            <person name="Xu J.-R."/>
            <person name="Antoniw J."/>
            <person name="Baker S.E."/>
            <person name="Bluhm B.H."/>
            <person name="Breakspear A."/>
            <person name="Brown D.W."/>
            <person name="Butchko R.A.E."/>
            <person name="Chapman S."/>
            <person name="Coulson R."/>
            <person name="Coutinho P.M."/>
            <person name="Danchin E.G.J."/>
            <person name="Diener A."/>
            <person name="Gale L.R."/>
            <person name="Gardiner D.M."/>
            <person name="Goff S."/>
            <person name="Hammond-Kosack K.E."/>
            <person name="Hilburn K."/>
            <person name="Hua-Van A."/>
            <person name="Jonkers W."/>
            <person name="Kazan K."/>
            <person name="Kodira C.D."/>
            <person name="Koehrsen M."/>
            <person name="Kumar L."/>
            <person name="Lee Y.-H."/>
            <person name="Li L."/>
            <person name="Manners J.M."/>
            <person name="Miranda-Saavedra D."/>
            <person name="Mukherjee M."/>
            <person name="Park G."/>
            <person name="Park J."/>
            <person name="Park S.-Y."/>
            <person name="Proctor R.H."/>
            <person name="Regev A."/>
            <person name="Ruiz-Roldan M.C."/>
            <person name="Sain D."/>
            <person name="Sakthikumar S."/>
            <person name="Sykes S."/>
            <person name="Schwartz D.C."/>
            <person name="Turgeon B.G."/>
            <person name="Wapinski I."/>
            <person name="Yoder O."/>
            <person name="Young S."/>
            <person name="Zeng Q."/>
            <person name="Zhou S."/>
            <person name="Galagan J."/>
            <person name="Cuomo C.A."/>
            <person name="Kistler H.C."/>
            <person name="Rep M."/>
        </authorList>
    </citation>
    <scope>NUCLEOTIDE SEQUENCE [LARGE SCALE GENOMIC DNA]</scope>
    <source>
        <strain>M3125 / FGSC 7600</strain>
    </source>
</reference>
<reference key="3">
    <citation type="journal article" date="2003" name="J. Agric. Food Chem.">
        <title>FUM13 encodes a short chain dehydrogenase/reductase required for C-3 carbonyl reduction during fumonisin biosynthesis in Gibberella moniliformis.</title>
        <authorList>
            <person name="Butchko R.A."/>
            <person name="Plattner R.D."/>
            <person name="Proctor R.H."/>
        </authorList>
    </citation>
    <scope>FUNCTION</scope>
    <scope>DISRUPTION PHENOTYPE</scope>
    <scope>PATHWAY</scope>
</reference>
<reference key="4">
    <citation type="journal article" date="2005" name="J. Agric. Food Chem.">
        <title>Direct evidence for the function of FUM13 in 3-ketoreduction of mycotoxin fumonisins in Fusarium verticillioides.</title>
        <authorList>
            <person name="Yi H."/>
            <person name="Bojja R.S."/>
            <person name="Fu J."/>
            <person name="Du L."/>
        </authorList>
    </citation>
    <scope>FUNCTION</scope>
    <scope>CATALYTIC ACTIVITY</scope>
    <scope>PATHWAY</scope>
</reference>
<dbReference type="EC" id="1.1.1.-" evidence="4"/>
<dbReference type="EMBL" id="AF155773">
    <property type="protein sequence ID" value="AAN74816.1"/>
    <property type="molecule type" value="Genomic_DNA"/>
</dbReference>
<dbReference type="EMBL" id="CM000578">
    <property type="protein sequence ID" value="EWG36204.1"/>
    <property type="molecule type" value="Genomic_DNA"/>
</dbReference>
<dbReference type="RefSeq" id="XP_018742395.1">
    <property type="nucleotide sequence ID" value="XM_018886761.1"/>
</dbReference>
<dbReference type="SMR" id="W7LL82"/>
<dbReference type="STRING" id="334819.W7LL82"/>
<dbReference type="EnsemblFungi" id="FVEG_00324T0">
    <property type="protein sequence ID" value="FVEG_00324T0"/>
    <property type="gene ID" value="FVEG_00324"/>
</dbReference>
<dbReference type="GeneID" id="30058701"/>
<dbReference type="KEGG" id="fvr:FVEG_00324"/>
<dbReference type="VEuPathDB" id="FungiDB:FVEG_00324"/>
<dbReference type="eggNOG" id="KOG1502">
    <property type="taxonomic scope" value="Eukaryota"/>
</dbReference>
<dbReference type="HOGENOM" id="CLU_007383_9_2_1"/>
<dbReference type="OMA" id="PKIPGNQ"/>
<dbReference type="OrthoDB" id="73522at110618"/>
<dbReference type="Proteomes" id="UP000009096">
    <property type="component" value="Chromosome 1"/>
</dbReference>
<dbReference type="GO" id="GO:0016616">
    <property type="term" value="F:oxidoreductase activity, acting on the CH-OH group of donors, NAD or NADP as acceptor"/>
    <property type="evidence" value="ECO:0007669"/>
    <property type="project" value="TreeGrafter"/>
</dbReference>
<dbReference type="GO" id="GO:1900541">
    <property type="term" value="P:fumonisin biosynthetic process"/>
    <property type="evidence" value="ECO:0000315"/>
    <property type="project" value="GO_Central"/>
</dbReference>
<dbReference type="CDD" id="cd05227">
    <property type="entry name" value="AR_SDR_e"/>
    <property type="match status" value="1"/>
</dbReference>
<dbReference type="Gene3D" id="3.40.50.720">
    <property type="entry name" value="NAD(P)-binding Rossmann-like Domain"/>
    <property type="match status" value="1"/>
</dbReference>
<dbReference type="InterPro" id="IPR001509">
    <property type="entry name" value="Epimerase_deHydtase"/>
</dbReference>
<dbReference type="InterPro" id="IPR036291">
    <property type="entry name" value="NAD(P)-bd_dom_sf"/>
</dbReference>
<dbReference type="InterPro" id="IPR050425">
    <property type="entry name" value="NAD(P)_dehydrat-like"/>
</dbReference>
<dbReference type="PANTHER" id="PTHR10366">
    <property type="entry name" value="NAD DEPENDENT EPIMERASE/DEHYDRATASE"/>
    <property type="match status" value="1"/>
</dbReference>
<dbReference type="PANTHER" id="PTHR10366:SF564">
    <property type="entry name" value="STEROL-4-ALPHA-CARBOXYLATE 3-DEHYDROGENASE, DECARBOXYLATING"/>
    <property type="match status" value="1"/>
</dbReference>
<dbReference type="Pfam" id="PF01370">
    <property type="entry name" value="Epimerase"/>
    <property type="match status" value="1"/>
</dbReference>
<dbReference type="SUPFAM" id="SSF51735">
    <property type="entry name" value="NAD(P)-binding Rossmann-fold domains"/>
    <property type="match status" value="1"/>
</dbReference>
<name>FUM13_GIBM7</name>
<gene>
    <name evidence="5" type="primary">FUM13</name>
    <name type="ORF">FVEG_00324</name>
</gene>
<accession>W7LL82</accession>
<accession>Q8J2Q7</accession>